<evidence type="ECO:0000255" key="1">
    <source>
        <dbReference type="HAMAP-Rule" id="MF_01364"/>
    </source>
</evidence>
<evidence type="ECO:0000305" key="2"/>
<gene>
    <name evidence="1" type="primary">rpsZ</name>
    <name evidence="1" type="synonym">rpsN</name>
    <name type="ordered locus">Krad_0701</name>
</gene>
<organism>
    <name type="scientific">Kineococcus radiotolerans (strain ATCC BAA-149 / DSM 14245 / SRS30216)</name>
    <dbReference type="NCBI Taxonomy" id="266940"/>
    <lineage>
        <taxon>Bacteria</taxon>
        <taxon>Bacillati</taxon>
        <taxon>Actinomycetota</taxon>
        <taxon>Actinomycetes</taxon>
        <taxon>Kineosporiales</taxon>
        <taxon>Kineosporiaceae</taxon>
        <taxon>Kineococcus</taxon>
    </lineage>
</organism>
<sequence>MAKTALITKAARKPKFKVRGYTRCQRCGRPHAVFRKFGLCRICVREMAHAGELPGVTKSSW</sequence>
<dbReference type="EMBL" id="CP000750">
    <property type="protein sequence ID" value="ABS02190.1"/>
    <property type="molecule type" value="Genomic_DNA"/>
</dbReference>
<dbReference type="RefSeq" id="WP_012084968.1">
    <property type="nucleotide sequence ID" value="NC_009664.2"/>
</dbReference>
<dbReference type="SMR" id="A6W5V1"/>
<dbReference type="STRING" id="266940.Krad_0701"/>
<dbReference type="KEGG" id="kra:Krad_0701"/>
<dbReference type="eggNOG" id="COG0199">
    <property type="taxonomic scope" value="Bacteria"/>
</dbReference>
<dbReference type="HOGENOM" id="CLU_139869_3_0_11"/>
<dbReference type="OrthoDB" id="9810484at2"/>
<dbReference type="Proteomes" id="UP000001116">
    <property type="component" value="Chromosome"/>
</dbReference>
<dbReference type="GO" id="GO:0005737">
    <property type="term" value="C:cytoplasm"/>
    <property type="evidence" value="ECO:0007669"/>
    <property type="project" value="UniProtKB-ARBA"/>
</dbReference>
<dbReference type="GO" id="GO:0015935">
    <property type="term" value="C:small ribosomal subunit"/>
    <property type="evidence" value="ECO:0007669"/>
    <property type="project" value="TreeGrafter"/>
</dbReference>
<dbReference type="GO" id="GO:0019843">
    <property type="term" value="F:rRNA binding"/>
    <property type="evidence" value="ECO:0007669"/>
    <property type="project" value="UniProtKB-UniRule"/>
</dbReference>
<dbReference type="GO" id="GO:0003735">
    <property type="term" value="F:structural constituent of ribosome"/>
    <property type="evidence" value="ECO:0007669"/>
    <property type="project" value="InterPro"/>
</dbReference>
<dbReference type="GO" id="GO:0008270">
    <property type="term" value="F:zinc ion binding"/>
    <property type="evidence" value="ECO:0007669"/>
    <property type="project" value="UniProtKB-UniRule"/>
</dbReference>
<dbReference type="GO" id="GO:0006412">
    <property type="term" value="P:translation"/>
    <property type="evidence" value="ECO:0007669"/>
    <property type="project" value="UniProtKB-UniRule"/>
</dbReference>
<dbReference type="FunFam" id="4.10.830.10:FF:000001">
    <property type="entry name" value="30S ribosomal protein S14 type Z"/>
    <property type="match status" value="1"/>
</dbReference>
<dbReference type="Gene3D" id="4.10.830.10">
    <property type="entry name" value="30s Ribosomal Protein S14, Chain N"/>
    <property type="match status" value="1"/>
</dbReference>
<dbReference type="HAMAP" id="MF_01364_B">
    <property type="entry name" value="Ribosomal_uS14_2_B"/>
    <property type="match status" value="1"/>
</dbReference>
<dbReference type="InterPro" id="IPR001209">
    <property type="entry name" value="Ribosomal_uS14"/>
</dbReference>
<dbReference type="InterPro" id="IPR023053">
    <property type="entry name" value="Ribosomal_uS14_bact"/>
</dbReference>
<dbReference type="InterPro" id="IPR018271">
    <property type="entry name" value="Ribosomal_uS14_CS"/>
</dbReference>
<dbReference type="InterPro" id="IPR043140">
    <property type="entry name" value="Ribosomal_uS14_sf"/>
</dbReference>
<dbReference type="NCBIfam" id="NF005974">
    <property type="entry name" value="PRK08061.1"/>
    <property type="match status" value="1"/>
</dbReference>
<dbReference type="PANTHER" id="PTHR19836">
    <property type="entry name" value="30S RIBOSOMAL PROTEIN S14"/>
    <property type="match status" value="1"/>
</dbReference>
<dbReference type="PANTHER" id="PTHR19836:SF19">
    <property type="entry name" value="SMALL RIBOSOMAL SUBUNIT PROTEIN US14M"/>
    <property type="match status" value="1"/>
</dbReference>
<dbReference type="Pfam" id="PF00253">
    <property type="entry name" value="Ribosomal_S14"/>
    <property type="match status" value="1"/>
</dbReference>
<dbReference type="SUPFAM" id="SSF57716">
    <property type="entry name" value="Glucocorticoid receptor-like (DNA-binding domain)"/>
    <property type="match status" value="1"/>
</dbReference>
<dbReference type="PROSITE" id="PS00527">
    <property type="entry name" value="RIBOSOMAL_S14"/>
    <property type="match status" value="1"/>
</dbReference>
<name>RS14Z_KINRD</name>
<proteinExistence type="inferred from homology"/>
<keyword id="KW-0479">Metal-binding</keyword>
<keyword id="KW-1185">Reference proteome</keyword>
<keyword id="KW-0687">Ribonucleoprotein</keyword>
<keyword id="KW-0689">Ribosomal protein</keyword>
<keyword id="KW-0694">RNA-binding</keyword>
<keyword id="KW-0699">rRNA-binding</keyword>
<keyword id="KW-0862">Zinc</keyword>
<reference key="1">
    <citation type="journal article" date="2008" name="PLoS ONE">
        <title>Survival in nuclear waste, extreme resistance, and potential applications gleaned from the genome sequence of Kineococcus radiotolerans SRS30216.</title>
        <authorList>
            <person name="Bagwell C.E."/>
            <person name="Bhat S."/>
            <person name="Hawkins G.M."/>
            <person name="Smith B.W."/>
            <person name="Biswas T."/>
            <person name="Hoover T.R."/>
            <person name="Saunders E."/>
            <person name="Han C.S."/>
            <person name="Tsodikov O.V."/>
            <person name="Shimkets L.J."/>
        </authorList>
    </citation>
    <scope>NUCLEOTIDE SEQUENCE [LARGE SCALE GENOMIC DNA]</scope>
    <source>
        <strain>ATCC BAA-149 / DSM 14245 / SRS30216</strain>
    </source>
</reference>
<comment type="function">
    <text evidence="1">Binds 16S rRNA, required for the assembly of 30S particles and may also be responsible for determining the conformation of the 16S rRNA at the A site.</text>
</comment>
<comment type="cofactor">
    <cofactor evidence="1">
        <name>Zn(2+)</name>
        <dbReference type="ChEBI" id="CHEBI:29105"/>
    </cofactor>
    <text evidence="1">Binds 1 zinc ion per subunit.</text>
</comment>
<comment type="subunit">
    <text evidence="1">Part of the 30S ribosomal subunit. Contacts proteins S3 and S10.</text>
</comment>
<comment type="similarity">
    <text evidence="1">Belongs to the universal ribosomal protein uS14 family. Zinc-binding uS14 subfamily.</text>
</comment>
<feature type="chain" id="PRO_1000087016" description="Small ribosomal subunit protein uS14B">
    <location>
        <begin position="1"/>
        <end position="61"/>
    </location>
</feature>
<feature type="binding site" evidence="1">
    <location>
        <position position="24"/>
    </location>
    <ligand>
        <name>Zn(2+)</name>
        <dbReference type="ChEBI" id="CHEBI:29105"/>
    </ligand>
</feature>
<feature type="binding site" evidence="1">
    <location>
        <position position="27"/>
    </location>
    <ligand>
        <name>Zn(2+)</name>
        <dbReference type="ChEBI" id="CHEBI:29105"/>
    </ligand>
</feature>
<feature type="binding site" evidence="1">
    <location>
        <position position="40"/>
    </location>
    <ligand>
        <name>Zn(2+)</name>
        <dbReference type="ChEBI" id="CHEBI:29105"/>
    </ligand>
</feature>
<feature type="binding site" evidence="1">
    <location>
        <position position="43"/>
    </location>
    <ligand>
        <name>Zn(2+)</name>
        <dbReference type="ChEBI" id="CHEBI:29105"/>
    </ligand>
</feature>
<accession>A6W5V1</accession>
<protein>
    <recommendedName>
        <fullName evidence="1">Small ribosomal subunit protein uS14B</fullName>
    </recommendedName>
    <alternativeName>
        <fullName evidence="2">30S ribosomal protein S14 type Z</fullName>
    </alternativeName>
</protein>